<accession>B7JDF1</accession>
<feature type="chain" id="PRO_1000131807" description="1,4-alpha-glucan branching enzyme GlgB">
    <location>
        <begin position="1"/>
        <end position="645"/>
    </location>
</feature>
<feature type="region of interest" description="Disordered" evidence="2">
    <location>
        <begin position="619"/>
        <end position="645"/>
    </location>
</feature>
<feature type="compositionally biased region" description="Polar residues" evidence="2">
    <location>
        <begin position="636"/>
        <end position="645"/>
    </location>
</feature>
<feature type="active site" description="Nucleophile" evidence="1">
    <location>
        <position position="309"/>
    </location>
</feature>
<feature type="active site" description="Proton donor" evidence="1">
    <location>
        <position position="352"/>
    </location>
</feature>
<name>GLGB_BACC0</name>
<sequence>MSVINCEEVKRDEFHTEKYYESYNIFGAHIVTEDEMRGVRFTVWAPHAKAMSVVGDFNEWDYEQHKMLQVTEEGIWSLFIPHIEEREIYKYAIETMAGDVIFKADPYAVYAEVRPNTASVVFDIKGYEWNDKNWSRKKKKKSVYKEAMTVYELHFGSWKKKEDGTLYSYREMAEELIPYVVEHQFTHIEIMPLVEHPYDRSWGYQGTGYYAATSRFGTPYDLMHFVDECHKYGIGVILDWVPGHFCKDAHGLYLFDGTPTYEYKDKDVQENPVWGTVNFDLGKREVRNFLISNALFWMRYFHIDGFRVDAVANMLYWNKEGQEQSNEHAVSFLRELNEAVFAEDEDFLMTAEDSTAWPLVTAPTYEGGLGFNYKWNMGWMNDVLKYMECAPEYRKYIHDKMTFSLLYAYSENFILPLSHDEVVHGKKSLLNKMPGDYWDKFAQLRLLYGYFFTHPGKKLLFMGGEFGQFDEWKDLEDLDWNLHDFEMHRYMHDYFKELIALYKRSKPLWQLDHSREGFQWIDANNNEQSIFSFIRQGDKQEDALVVVCNFTKATYENYKVGVPDFEYYNEILNSDAEQYGGSGQVNKKRLKTIQEPYHNQTAHVEITIPPFGVSILRPVKTRKGSKKQDGSKTKVRSNVTSRGKR</sequence>
<comment type="function">
    <text evidence="1">Catalyzes the formation of the alpha-1,6-glucosidic linkages in glycogen by scission of a 1,4-alpha-linked oligosaccharide from growing alpha-1,4-glucan chains and the subsequent attachment of the oligosaccharide to the alpha-1,6 position.</text>
</comment>
<comment type="catalytic activity">
    <reaction evidence="1">
        <text>Transfers a segment of a (1-&gt;4)-alpha-D-glucan chain to a primary hydroxy group in a similar glucan chain.</text>
        <dbReference type="EC" id="2.4.1.18"/>
    </reaction>
</comment>
<comment type="pathway">
    <text evidence="1">Glycan biosynthesis; glycogen biosynthesis.</text>
</comment>
<comment type="subunit">
    <text evidence="1">Monomer.</text>
</comment>
<comment type="similarity">
    <text evidence="1">Belongs to the glycosyl hydrolase 13 family. GlgB subfamily.</text>
</comment>
<protein>
    <recommendedName>
        <fullName evidence="1">1,4-alpha-glucan branching enzyme GlgB</fullName>
        <ecNumber evidence="1">2.4.1.18</ecNumber>
    </recommendedName>
    <alternativeName>
        <fullName evidence="1">1,4-alpha-D-glucan:1,4-alpha-D-glucan 6-glucosyl-transferase</fullName>
    </alternativeName>
    <alternativeName>
        <fullName evidence="1">Alpha-(1-&gt;4)-glucan branching enzyme</fullName>
    </alternativeName>
    <alternativeName>
        <fullName evidence="1">Glycogen branching enzyme</fullName>
        <shortName evidence="1">BE</shortName>
    </alternativeName>
</protein>
<organism>
    <name type="scientific">Bacillus cereus (strain AH820)</name>
    <dbReference type="NCBI Taxonomy" id="405535"/>
    <lineage>
        <taxon>Bacteria</taxon>
        <taxon>Bacillati</taxon>
        <taxon>Bacillota</taxon>
        <taxon>Bacilli</taxon>
        <taxon>Bacillales</taxon>
        <taxon>Bacillaceae</taxon>
        <taxon>Bacillus</taxon>
        <taxon>Bacillus cereus group</taxon>
    </lineage>
</organism>
<keyword id="KW-0119">Carbohydrate metabolism</keyword>
<keyword id="KW-0320">Glycogen biosynthesis</keyword>
<keyword id="KW-0321">Glycogen metabolism</keyword>
<keyword id="KW-0328">Glycosyltransferase</keyword>
<keyword id="KW-0808">Transferase</keyword>
<proteinExistence type="inferred from homology"/>
<gene>
    <name evidence="1" type="primary">glgB</name>
    <name type="ordered locus">BCAH820_4980</name>
</gene>
<reference key="1">
    <citation type="submission" date="2008-10" db="EMBL/GenBank/DDBJ databases">
        <title>Genome sequence of Bacillus cereus AH820.</title>
        <authorList>
            <person name="Dodson R.J."/>
            <person name="Durkin A.S."/>
            <person name="Rosovitz M.J."/>
            <person name="Rasko D.A."/>
            <person name="Hoffmaster A."/>
            <person name="Ravel J."/>
            <person name="Sutton G."/>
        </authorList>
    </citation>
    <scope>NUCLEOTIDE SEQUENCE [LARGE SCALE GENOMIC DNA]</scope>
    <source>
        <strain>AH820</strain>
    </source>
</reference>
<evidence type="ECO:0000255" key="1">
    <source>
        <dbReference type="HAMAP-Rule" id="MF_00685"/>
    </source>
</evidence>
<evidence type="ECO:0000256" key="2">
    <source>
        <dbReference type="SAM" id="MobiDB-lite"/>
    </source>
</evidence>
<dbReference type="EC" id="2.4.1.18" evidence="1"/>
<dbReference type="EMBL" id="CP001283">
    <property type="protein sequence ID" value="ACK88551.1"/>
    <property type="molecule type" value="Genomic_DNA"/>
</dbReference>
<dbReference type="RefSeq" id="WP_000111383.1">
    <property type="nucleotide sequence ID" value="NC_011773.1"/>
</dbReference>
<dbReference type="SMR" id="B7JDF1"/>
<dbReference type="CAZy" id="CBM48">
    <property type="family name" value="Carbohydrate-Binding Module Family 48"/>
</dbReference>
<dbReference type="CAZy" id="GH13">
    <property type="family name" value="Glycoside Hydrolase Family 13"/>
</dbReference>
<dbReference type="KEGG" id="bcu:BCAH820_4980"/>
<dbReference type="HOGENOM" id="CLU_004245_4_0_9"/>
<dbReference type="UniPathway" id="UPA00164"/>
<dbReference type="Proteomes" id="UP000001363">
    <property type="component" value="Chromosome"/>
</dbReference>
<dbReference type="GO" id="GO:0005829">
    <property type="term" value="C:cytosol"/>
    <property type="evidence" value="ECO:0007669"/>
    <property type="project" value="TreeGrafter"/>
</dbReference>
<dbReference type="GO" id="GO:0003844">
    <property type="term" value="F:1,4-alpha-glucan branching enzyme activity"/>
    <property type="evidence" value="ECO:0007669"/>
    <property type="project" value="UniProtKB-UniRule"/>
</dbReference>
<dbReference type="GO" id="GO:0043169">
    <property type="term" value="F:cation binding"/>
    <property type="evidence" value="ECO:0007669"/>
    <property type="project" value="InterPro"/>
</dbReference>
<dbReference type="GO" id="GO:0004553">
    <property type="term" value="F:hydrolase activity, hydrolyzing O-glycosyl compounds"/>
    <property type="evidence" value="ECO:0007669"/>
    <property type="project" value="InterPro"/>
</dbReference>
<dbReference type="GO" id="GO:0005978">
    <property type="term" value="P:glycogen biosynthetic process"/>
    <property type="evidence" value="ECO:0007669"/>
    <property type="project" value="UniProtKB-UniRule"/>
</dbReference>
<dbReference type="CDD" id="cd11322">
    <property type="entry name" value="AmyAc_Glg_BE"/>
    <property type="match status" value="1"/>
</dbReference>
<dbReference type="CDD" id="cd02855">
    <property type="entry name" value="E_set_GBE_prok_N"/>
    <property type="match status" value="1"/>
</dbReference>
<dbReference type="FunFam" id="2.60.40.10:FF:000169">
    <property type="entry name" value="1,4-alpha-glucan branching enzyme GlgB"/>
    <property type="match status" value="1"/>
</dbReference>
<dbReference type="FunFam" id="2.60.40.1180:FF:000002">
    <property type="entry name" value="1,4-alpha-glucan branching enzyme GlgB"/>
    <property type="match status" value="1"/>
</dbReference>
<dbReference type="FunFam" id="3.20.20.80:FF:000003">
    <property type="entry name" value="1,4-alpha-glucan branching enzyme GlgB"/>
    <property type="match status" value="1"/>
</dbReference>
<dbReference type="Gene3D" id="3.20.20.80">
    <property type="entry name" value="Glycosidases"/>
    <property type="match status" value="1"/>
</dbReference>
<dbReference type="Gene3D" id="2.60.40.1180">
    <property type="entry name" value="Golgi alpha-mannosidase II"/>
    <property type="match status" value="1"/>
</dbReference>
<dbReference type="Gene3D" id="2.60.40.10">
    <property type="entry name" value="Immunoglobulins"/>
    <property type="match status" value="1"/>
</dbReference>
<dbReference type="HAMAP" id="MF_00685">
    <property type="entry name" value="GlgB"/>
    <property type="match status" value="1"/>
</dbReference>
<dbReference type="InterPro" id="IPR006048">
    <property type="entry name" value="A-amylase/branching_C"/>
</dbReference>
<dbReference type="InterPro" id="IPR037439">
    <property type="entry name" value="Branching_enzy"/>
</dbReference>
<dbReference type="InterPro" id="IPR006407">
    <property type="entry name" value="GlgB"/>
</dbReference>
<dbReference type="InterPro" id="IPR044143">
    <property type="entry name" value="GlgB_N_E_set_prok"/>
</dbReference>
<dbReference type="InterPro" id="IPR006047">
    <property type="entry name" value="Glyco_hydro_13_cat_dom"/>
</dbReference>
<dbReference type="InterPro" id="IPR004193">
    <property type="entry name" value="Glyco_hydro_13_N"/>
</dbReference>
<dbReference type="InterPro" id="IPR013780">
    <property type="entry name" value="Glyco_hydro_b"/>
</dbReference>
<dbReference type="InterPro" id="IPR017853">
    <property type="entry name" value="Glycoside_hydrolase_SF"/>
</dbReference>
<dbReference type="InterPro" id="IPR013783">
    <property type="entry name" value="Ig-like_fold"/>
</dbReference>
<dbReference type="NCBIfam" id="TIGR01515">
    <property type="entry name" value="branching_enzym"/>
    <property type="match status" value="1"/>
</dbReference>
<dbReference type="NCBIfam" id="NF003811">
    <property type="entry name" value="PRK05402.1"/>
    <property type="match status" value="1"/>
</dbReference>
<dbReference type="NCBIfam" id="NF008967">
    <property type="entry name" value="PRK12313.1"/>
    <property type="match status" value="1"/>
</dbReference>
<dbReference type="PANTHER" id="PTHR43651">
    <property type="entry name" value="1,4-ALPHA-GLUCAN-BRANCHING ENZYME"/>
    <property type="match status" value="1"/>
</dbReference>
<dbReference type="PANTHER" id="PTHR43651:SF3">
    <property type="entry name" value="1,4-ALPHA-GLUCAN-BRANCHING ENZYME"/>
    <property type="match status" value="1"/>
</dbReference>
<dbReference type="Pfam" id="PF00128">
    <property type="entry name" value="Alpha-amylase"/>
    <property type="match status" value="2"/>
</dbReference>
<dbReference type="Pfam" id="PF02806">
    <property type="entry name" value="Alpha-amylase_C"/>
    <property type="match status" value="1"/>
</dbReference>
<dbReference type="Pfam" id="PF02922">
    <property type="entry name" value="CBM_48"/>
    <property type="match status" value="1"/>
</dbReference>
<dbReference type="PIRSF" id="PIRSF000463">
    <property type="entry name" value="GlgB"/>
    <property type="match status" value="1"/>
</dbReference>
<dbReference type="SMART" id="SM00642">
    <property type="entry name" value="Aamy"/>
    <property type="match status" value="1"/>
</dbReference>
<dbReference type="SUPFAM" id="SSF51445">
    <property type="entry name" value="(Trans)glycosidases"/>
    <property type="match status" value="1"/>
</dbReference>
<dbReference type="SUPFAM" id="SSF51011">
    <property type="entry name" value="Glycosyl hydrolase domain"/>
    <property type="match status" value="1"/>
</dbReference>